<reference key="1">
    <citation type="journal article" date="2004" name="Genome Res.">
        <title>The complete genome and proteome of Mycoplasma mobile.</title>
        <authorList>
            <person name="Jaffe J.D."/>
            <person name="Stange-Thomann N."/>
            <person name="Smith C."/>
            <person name="DeCaprio D."/>
            <person name="Fisher S."/>
            <person name="Butler J."/>
            <person name="Calvo S."/>
            <person name="Elkins T."/>
            <person name="FitzGerald M.G."/>
            <person name="Hafez N."/>
            <person name="Kodira C.D."/>
            <person name="Major J."/>
            <person name="Wang S."/>
            <person name="Wilkinson J."/>
            <person name="Nicol R."/>
            <person name="Nusbaum C."/>
            <person name="Birren B."/>
            <person name="Berg H.C."/>
            <person name="Church G.M."/>
        </authorList>
    </citation>
    <scope>NUCLEOTIDE SEQUENCE [LARGE SCALE GENOMIC DNA]</scope>
    <source>
        <strain>ATCC 43663 / NCTC 11711 / 163 K</strain>
    </source>
</reference>
<feature type="chain" id="PRO_1000009538" description="tRNA-specific 2-thiouridylase MnmA">
    <location>
        <begin position="1"/>
        <end position="370"/>
    </location>
</feature>
<feature type="region of interest" description="Interaction with target base in tRNA" evidence="1">
    <location>
        <begin position="104"/>
        <end position="106"/>
    </location>
</feature>
<feature type="region of interest" description="Interaction with tRNA" evidence="1">
    <location>
        <begin position="152"/>
        <end position="154"/>
    </location>
</feature>
<feature type="region of interest" description="Interaction with tRNA" evidence="1">
    <location>
        <begin position="308"/>
        <end position="309"/>
    </location>
</feature>
<feature type="active site" description="Nucleophile" evidence="1">
    <location>
        <position position="109"/>
    </location>
</feature>
<feature type="active site" description="Cysteine persulfide intermediate" evidence="1">
    <location>
        <position position="202"/>
    </location>
</feature>
<feature type="binding site" evidence="1">
    <location>
        <begin position="7"/>
        <end position="14"/>
    </location>
    <ligand>
        <name>ATP</name>
        <dbReference type="ChEBI" id="CHEBI:30616"/>
    </ligand>
</feature>
<feature type="binding site" evidence="1">
    <location>
        <position position="34"/>
    </location>
    <ligand>
        <name>ATP</name>
        <dbReference type="ChEBI" id="CHEBI:30616"/>
    </ligand>
</feature>
<feature type="binding site" evidence="1">
    <location>
        <position position="134"/>
    </location>
    <ligand>
        <name>ATP</name>
        <dbReference type="ChEBI" id="CHEBI:30616"/>
    </ligand>
</feature>
<feature type="site" description="Interaction with tRNA" evidence="1">
    <location>
        <position position="135"/>
    </location>
</feature>
<feature type="site" description="Interaction with tRNA" evidence="1">
    <location>
        <position position="341"/>
    </location>
</feature>
<feature type="disulfide bond" description="Alternate" evidence="1">
    <location>
        <begin position="109"/>
        <end position="202"/>
    </location>
</feature>
<gene>
    <name evidence="1" type="primary">mnmA</name>
    <name type="synonym">trmU</name>
    <name type="ordered locus">MMOB4400</name>
</gene>
<evidence type="ECO:0000255" key="1">
    <source>
        <dbReference type="HAMAP-Rule" id="MF_00144"/>
    </source>
</evidence>
<organism>
    <name type="scientific">Mycoplasma mobile (strain ATCC 43663 / 163K / NCTC 11711)</name>
    <name type="common">Mesomycoplasma mobile</name>
    <dbReference type="NCBI Taxonomy" id="267748"/>
    <lineage>
        <taxon>Bacteria</taxon>
        <taxon>Bacillati</taxon>
        <taxon>Mycoplasmatota</taxon>
        <taxon>Mycoplasmoidales</taxon>
        <taxon>Metamycoplasmataceae</taxon>
        <taxon>Mesomycoplasma</taxon>
    </lineage>
</organism>
<accession>Q6KHK4</accession>
<sequence length="370" mass="42882">MSKIVVALSGGVDSSVTAFILKYQQNHEVIAVFMRNWDSFANNDILGNEDINQDICPQEKDWEDAKKIASQLNIPIYRVDFVKEYYDEVFTYLIEEYRQGRTPNPDIFCNKYIKFGKFIEYVEKNFNPDFIATGHYAKVENSLLYRAKDRNKDQSYFLSQLSSDQLKKIIFPLKDLTKDVIRKIAAENNLVTAQKKDSTGICFIGERNFDKFLQNYIPNMPGNIVDIETNEVVGQHVGVMYYTLGQRKINLSGMKYPYYVAGHDLKNKILYVASIHSKNYLKSDKLEAIEFNLINKNFNKKNLTAKFRYRQEDIKIEILNIDKNKIEISYPDEFEAVTPGQHVVIYDGESCVGGGIINKTYYKGNLNQFH</sequence>
<name>MNMA_MYCM1</name>
<protein>
    <recommendedName>
        <fullName evidence="1">tRNA-specific 2-thiouridylase MnmA</fullName>
        <ecNumber evidence="1">2.8.1.13</ecNumber>
    </recommendedName>
</protein>
<comment type="function">
    <text evidence="1">Catalyzes the 2-thiolation of uridine at the wobble position (U34) of tRNA, leading to the formation of s(2)U34.</text>
</comment>
<comment type="catalytic activity">
    <reaction evidence="1">
        <text>S-sulfanyl-L-cysteinyl-[protein] + uridine(34) in tRNA + AH2 + ATP = 2-thiouridine(34) in tRNA + L-cysteinyl-[protein] + A + AMP + diphosphate + H(+)</text>
        <dbReference type="Rhea" id="RHEA:47032"/>
        <dbReference type="Rhea" id="RHEA-COMP:10131"/>
        <dbReference type="Rhea" id="RHEA-COMP:11726"/>
        <dbReference type="Rhea" id="RHEA-COMP:11727"/>
        <dbReference type="Rhea" id="RHEA-COMP:11728"/>
        <dbReference type="ChEBI" id="CHEBI:13193"/>
        <dbReference type="ChEBI" id="CHEBI:15378"/>
        <dbReference type="ChEBI" id="CHEBI:17499"/>
        <dbReference type="ChEBI" id="CHEBI:29950"/>
        <dbReference type="ChEBI" id="CHEBI:30616"/>
        <dbReference type="ChEBI" id="CHEBI:33019"/>
        <dbReference type="ChEBI" id="CHEBI:61963"/>
        <dbReference type="ChEBI" id="CHEBI:65315"/>
        <dbReference type="ChEBI" id="CHEBI:87170"/>
        <dbReference type="ChEBI" id="CHEBI:456215"/>
        <dbReference type="EC" id="2.8.1.13"/>
    </reaction>
</comment>
<comment type="subcellular location">
    <subcellularLocation>
        <location evidence="1">Cytoplasm</location>
    </subcellularLocation>
</comment>
<comment type="similarity">
    <text evidence="1">Belongs to the MnmA/TRMU family.</text>
</comment>
<keyword id="KW-0067">ATP-binding</keyword>
<keyword id="KW-0963">Cytoplasm</keyword>
<keyword id="KW-1015">Disulfide bond</keyword>
<keyword id="KW-0547">Nucleotide-binding</keyword>
<keyword id="KW-1185">Reference proteome</keyword>
<keyword id="KW-0694">RNA-binding</keyword>
<keyword id="KW-0808">Transferase</keyword>
<keyword id="KW-0819">tRNA processing</keyword>
<keyword id="KW-0820">tRNA-binding</keyword>
<proteinExistence type="inferred from homology"/>
<dbReference type="EC" id="2.8.1.13" evidence="1"/>
<dbReference type="EMBL" id="AE017308">
    <property type="protein sequence ID" value="AAT27926.1"/>
    <property type="molecule type" value="Genomic_DNA"/>
</dbReference>
<dbReference type="RefSeq" id="WP_011264960.1">
    <property type="nucleotide sequence ID" value="NC_006908.1"/>
</dbReference>
<dbReference type="SMR" id="Q6KHK4"/>
<dbReference type="STRING" id="267748.MMOB4400"/>
<dbReference type="KEGG" id="mmo:MMOB4400"/>
<dbReference type="eggNOG" id="COG0482">
    <property type="taxonomic scope" value="Bacteria"/>
</dbReference>
<dbReference type="HOGENOM" id="CLU_035188_1_0_14"/>
<dbReference type="Proteomes" id="UP000009072">
    <property type="component" value="Chromosome"/>
</dbReference>
<dbReference type="GO" id="GO:0005737">
    <property type="term" value="C:cytoplasm"/>
    <property type="evidence" value="ECO:0007669"/>
    <property type="project" value="UniProtKB-SubCell"/>
</dbReference>
<dbReference type="GO" id="GO:0005524">
    <property type="term" value="F:ATP binding"/>
    <property type="evidence" value="ECO:0007669"/>
    <property type="project" value="UniProtKB-KW"/>
</dbReference>
<dbReference type="GO" id="GO:0000049">
    <property type="term" value="F:tRNA binding"/>
    <property type="evidence" value="ECO:0007669"/>
    <property type="project" value="UniProtKB-KW"/>
</dbReference>
<dbReference type="GO" id="GO:0103016">
    <property type="term" value="F:tRNA-uridine 2-sulfurtransferase activity"/>
    <property type="evidence" value="ECO:0007669"/>
    <property type="project" value="UniProtKB-EC"/>
</dbReference>
<dbReference type="GO" id="GO:0002143">
    <property type="term" value="P:tRNA wobble position uridine thiolation"/>
    <property type="evidence" value="ECO:0007669"/>
    <property type="project" value="TreeGrafter"/>
</dbReference>
<dbReference type="CDD" id="cd01998">
    <property type="entry name" value="MnmA_TRMU-like"/>
    <property type="match status" value="1"/>
</dbReference>
<dbReference type="FunFam" id="2.30.30.280:FF:000001">
    <property type="entry name" value="tRNA-specific 2-thiouridylase MnmA"/>
    <property type="match status" value="1"/>
</dbReference>
<dbReference type="FunFam" id="2.40.30.10:FF:000023">
    <property type="entry name" value="tRNA-specific 2-thiouridylase MnmA"/>
    <property type="match status" value="1"/>
</dbReference>
<dbReference type="FunFam" id="3.40.50.620:FF:000115">
    <property type="entry name" value="tRNA-specific 2-thiouridylase MnmA"/>
    <property type="match status" value="1"/>
</dbReference>
<dbReference type="Gene3D" id="2.30.30.280">
    <property type="entry name" value="Adenine nucleotide alpha hydrolases-like domains"/>
    <property type="match status" value="1"/>
</dbReference>
<dbReference type="Gene3D" id="3.40.50.620">
    <property type="entry name" value="HUPs"/>
    <property type="match status" value="1"/>
</dbReference>
<dbReference type="Gene3D" id="2.40.30.10">
    <property type="entry name" value="Translation factors"/>
    <property type="match status" value="1"/>
</dbReference>
<dbReference type="HAMAP" id="MF_00144">
    <property type="entry name" value="tRNA_thiouridyl_MnmA"/>
    <property type="match status" value="1"/>
</dbReference>
<dbReference type="InterPro" id="IPR004506">
    <property type="entry name" value="MnmA-like"/>
</dbReference>
<dbReference type="InterPro" id="IPR046885">
    <property type="entry name" value="MnmA-like_C"/>
</dbReference>
<dbReference type="InterPro" id="IPR046884">
    <property type="entry name" value="MnmA-like_central"/>
</dbReference>
<dbReference type="InterPro" id="IPR023382">
    <property type="entry name" value="MnmA-like_central_sf"/>
</dbReference>
<dbReference type="InterPro" id="IPR014729">
    <property type="entry name" value="Rossmann-like_a/b/a_fold"/>
</dbReference>
<dbReference type="NCBIfam" id="NF001138">
    <property type="entry name" value="PRK00143.1"/>
    <property type="match status" value="1"/>
</dbReference>
<dbReference type="NCBIfam" id="TIGR00420">
    <property type="entry name" value="trmU"/>
    <property type="match status" value="1"/>
</dbReference>
<dbReference type="PANTHER" id="PTHR11933:SF5">
    <property type="entry name" value="MITOCHONDRIAL TRNA-SPECIFIC 2-THIOURIDYLASE 1"/>
    <property type="match status" value="1"/>
</dbReference>
<dbReference type="PANTHER" id="PTHR11933">
    <property type="entry name" value="TRNA 5-METHYLAMINOMETHYL-2-THIOURIDYLATE -METHYLTRANSFERASE"/>
    <property type="match status" value="1"/>
</dbReference>
<dbReference type="Pfam" id="PF03054">
    <property type="entry name" value="tRNA_Me_trans"/>
    <property type="match status" value="1"/>
</dbReference>
<dbReference type="Pfam" id="PF20258">
    <property type="entry name" value="tRNA_Me_trans_C"/>
    <property type="match status" value="1"/>
</dbReference>
<dbReference type="Pfam" id="PF20259">
    <property type="entry name" value="tRNA_Me_trans_M"/>
    <property type="match status" value="1"/>
</dbReference>
<dbReference type="SUPFAM" id="SSF52402">
    <property type="entry name" value="Adenine nucleotide alpha hydrolases-like"/>
    <property type="match status" value="1"/>
</dbReference>